<dbReference type="EMBL" id="CP001063">
    <property type="protein sequence ID" value="ACD09479.1"/>
    <property type="molecule type" value="Genomic_DNA"/>
</dbReference>
<dbReference type="RefSeq" id="WP_001295356.1">
    <property type="nucleotide sequence ID" value="NC_010658.1"/>
</dbReference>
<dbReference type="SMR" id="B2TTS8"/>
<dbReference type="STRING" id="344609.SbBS512_E2349"/>
<dbReference type="GeneID" id="93776448"/>
<dbReference type="KEGG" id="sbc:SbBS512_E2349"/>
<dbReference type="HOGENOM" id="CLU_123865_1_0_6"/>
<dbReference type="Proteomes" id="UP000001030">
    <property type="component" value="Chromosome"/>
</dbReference>
<dbReference type="GO" id="GO:0005737">
    <property type="term" value="C:cytoplasm"/>
    <property type="evidence" value="ECO:0007669"/>
    <property type="project" value="UniProtKB-SubCell"/>
</dbReference>
<dbReference type="GO" id="GO:0003677">
    <property type="term" value="F:DNA binding"/>
    <property type="evidence" value="ECO:0007669"/>
    <property type="project" value="InterPro"/>
</dbReference>
<dbReference type="GO" id="GO:0009408">
    <property type="term" value="P:response to heat"/>
    <property type="evidence" value="ECO:0007669"/>
    <property type="project" value="UniProtKB-UniRule"/>
</dbReference>
<dbReference type="Gene3D" id="2.30.30.390">
    <property type="entry name" value="Hemimethylated DNA-binding domain"/>
    <property type="match status" value="1"/>
</dbReference>
<dbReference type="HAMAP" id="MF_01194">
    <property type="entry name" value="HspQ"/>
    <property type="match status" value="1"/>
</dbReference>
<dbReference type="InterPro" id="IPR011722">
    <property type="entry name" value="Hemimethylated_DNA-bd_dom"/>
</dbReference>
<dbReference type="InterPro" id="IPR036623">
    <property type="entry name" value="Hemimethylated_DNA-bd_sf"/>
</dbReference>
<dbReference type="InterPro" id="IPR022866">
    <property type="entry name" value="HspQ"/>
</dbReference>
<dbReference type="NCBIfam" id="NF010729">
    <property type="entry name" value="PRK14129.1"/>
    <property type="match status" value="1"/>
</dbReference>
<dbReference type="NCBIfam" id="TIGR02097">
    <property type="entry name" value="yccV"/>
    <property type="match status" value="1"/>
</dbReference>
<dbReference type="Pfam" id="PF08755">
    <property type="entry name" value="YccV-like"/>
    <property type="match status" value="1"/>
</dbReference>
<dbReference type="SMART" id="SM00992">
    <property type="entry name" value="YccV-like"/>
    <property type="match status" value="1"/>
</dbReference>
<dbReference type="SUPFAM" id="SSF141255">
    <property type="entry name" value="YccV-like"/>
    <property type="match status" value="1"/>
</dbReference>
<proteinExistence type="inferred from homology"/>
<accession>B2TTS8</accession>
<protein>
    <recommendedName>
        <fullName evidence="1">Heat shock protein HspQ</fullName>
    </recommendedName>
</protein>
<gene>
    <name evidence="1" type="primary">hspQ</name>
    <name type="ordered locus">SbBS512_E2349</name>
</gene>
<sequence>MIASKFGIGQQVRHSLLGYLGVVVDIDPVYSLSEPSPDELAVNDELRAAPWYHVVMEDDNGLPVHTYLAEAQLSSELQDEHPEQPSMDELAQTIRKQLQAPRLRN</sequence>
<reference key="1">
    <citation type="submission" date="2008-05" db="EMBL/GenBank/DDBJ databases">
        <title>Complete sequence of Shigella boydii serotype 18 strain BS512.</title>
        <authorList>
            <person name="Rasko D.A."/>
            <person name="Rosovitz M."/>
            <person name="Maurelli A.T."/>
            <person name="Myers G."/>
            <person name="Seshadri R."/>
            <person name="Cer R."/>
            <person name="Jiang L."/>
            <person name="Ravel J."/>
            <person name="Sebastian Y."/>
        </authorList>
    </citation>
    <scope>NUCLEOTIDE SEQUENCE [LARGE SCALE GENOMIC DNA]</scope>
    <source>
        <strain>CDC 3083-94 / BS512</strain>
    </source>
</reference>
<evidence type="ECO:0000255" key="1">
    <source>
        <dbReference type="HAMAP-Rule" id="MF_01194"/>
    </source>
</evidence>
<evidence type="ECO:0000256" key="2">
    <source>
        <dbReference type="SAM" id="MobiDB-lite"/>
    </source>
</evidence>
<comment type="function">
    <text evidence="1">Involved in the degradation of certain denaturated proteins, including DnaA, during heat shock stress.</text>
</comment>
<comment type="subcellular location">
    <subcellularLocation>
        <location evidence="1">Cytoplasm</location>
    </subcellularLocation>
</comment>
<comment type="similarity">
    <text evidence="1">Belongs to the HspQ family.</text>
</comment>
<organism>
    <name type="scientific">Shigella boydii serotype 18 (strain CDC 3083-94 / BS512)</name>
    <dbReference type="NCBI Taxonomy" id="344609"/>
    <lineage>
        <taxon>Bacteria</taxon>
        <taxon>Pseudomonadati</taxon>
        <taxon>Pseudomonadota</taxon>
        <taxon>Gammaproteobacteria</taxon>
        <taxon>Enterobacterales</taxon>
        <taxon>Enterobacteriaceae</taxon>
        <taxon>Shigella</taxon>
    </lineage>
</organism>
<name>HSPQ_SHIB3</name>
<keyword id="KW-0963">Cytoplasm</keyword>
<keyword id="KW-1185">Reference proteome</keyword>
<keyword id="KW-0346">Stress response</keyword>
<feature type="chain" id="PRO_1000138421" description="Heat shock protein HspQ">
    <location>
        <begin position="1"/>
        <end position="105"/>
    </location>
</feature>
<feature type="region of interest" description="Disordered" evidence="2">
    <location>
        <begin position="75"/>
        <end position="105"/>
    </location>
</feature>